<accession>Q6N6B8</accession>
<proteinExistence type="inferred from homology"/>
<protein>
    <recommendedName>
        <fullName evidence="1">DNA repair protein RecO</fullName>
    </recommendedName>
    <alternativeName>
        <fullName evidence="1">Recombination protein O</fullName>
    </alternativeName>
</protein>
<name>RECO_RHOPA</name>
<organism>
    <name type="scientific">Rhodopseudomonas palustris (strain ATCC BAA-98 / CGA009)</name>
    <dbReference type="NCBI Taxonomy" id="258594"/>
    <lineage>
        <taxon>Bacteria</taxon>
        <taxon>Pseudomonadati</taxon>
        <taxon>Pseudomonadota</taxon>
        <taxon>Alphaproteobacteria</taxon>
        <taxon>Hyphomicrobiales</taxon>
        <taxon>Nitrobacteraceae</taxon>
        <taxon>Rhodopseudomonas</taxon>
    </lineage>
</organism>
<feature type="chain" id="PRO_0000204989" description="DNA repair protein RecO">
    <location>
        <begin position="1"/>
        <end position="250"/>
    </location>
</feature>
<reference key="1">
    <citation type="journal article" date="2004" name="Nat. Biotechnol.">
        <title>Complete genome sequence of the metabolically versatile photosynthetic bacterium Rhodopseudomonas palustris.</title>
        <authorList>
            <person name="Larimer F.W."/>
            <person name="Chain P."/>
            <person name="Hauser L."/>
            <person name="Lamerdin J.E."/>
            <person name="Malfatti S."/>
            <person name="Do L."/>
            <person name="Land M.L."/>
            <person name="Pelletier D.A."/>
            <person name="Beatty J.T."/>
            <person name="Lang A.S."/>
            <person name="Tabita F.R."/>
            <person name="Gibson J.L."/>
            <person name="Hanson T.E."/>
            <person name="Bobst C."/>
            <person name="Torres y Torres J.L."/>
            <person name="Peres C."/>
            <person name="Harrison F.H."/>
            <person name="Gibson J."/>
            <person name="Harwood C.S."/>
        </authorList>
    </citation>
    <scope>NUCLEOTIDE SEQUENCE [LARGE SCALE GENOMIC DNA]</scope>
    <source>
        <strain>ATCC BAA-98 / CGA009</strain>
    </source>
</reference>
<sequence>MEWSDEGIILGVRRHGESAAIVELLTRGHGRHLGMVRGGASARMRPLLQPGNSVLASWRARLDEHLGYYQLEATKMRAATLLGSSHAVYGVTHLASLARLLPERDPHEEIYQRLVLTLDDFDDFGVAAAHLIRFELAILAELGFGLDLSACAATGSTTELIYVSPKSGSAVSRSAGEPWRDRLLRLPAFLRDDEAESGHGWSGQDLFDGFELTGRFLLRNVLEPRGQSHSDARAGFINAITRALQRPAES</sequence>
<gene>
    <name evidence="1" type="primary">recO</name>
    <name type="ordered locus">RPA2700</name>
</gene>
<evidence type="ECO:0000255" key="1">
    <source>
        <dbReference type="HAMAP-Rule" id="MF_00201"/>
    </source>
</evidence>
<dbReference type="EMBL" id="BX572601">
    <property type="protein sequence ID" value="CAE28141.1"/>
    <property type="molecule type" value="Genomic_DNA"/>
</dbReference>
<dbReference type="RefSeq" id="WP_011158250.1">
    <property type="nucleotide sequence ID" value="NZ_CP116810.1"/>
</dbReference>
<dbReference type="SMR" id="Q6N6B8"/>
<dbReference type="STRING" id="258594.RPA2700"/>
<dbReference type="GeneID" id="66893775"/>
<dbReference type="eggNOG" id="COG1381">
    <property type="taxonomic scope" value="Bacteria"/>
</dbReference>
<dbReference type="HOGENOM" id="CLU_086029_0_0_5"/>
<dbReference type="PhylomeDB" id="Q6N6B8"/>
<dbReference type="GO" id="GO:0043590">
    <property type="term" value="C:bacterial nucleoid"/>
    <property type="evidence" value="ECO:0007669"/>
    <property type="project" value="TreeGrafter"/>
</dbReference>
<dbReference type="GO" id="GO:0006310">
    <property type="term" value="P:DNA recombination"/>
    <property type="evidence" value="ECO:0007669"/>
    <property type="project" value="UniProtKB-UniRule"/>
</dbReference>
<dbReference type="GO" id="GO:0006302">
    <property type="term" value="P:double-strand break repair"/>
    <property type="evidence" value="ECO:0007669"/>
    <property type="project" value="TreeGrafter"/>
</dbReference>
<dbReference type="Gene3D" id="2.40.50.140">
    <property type="entry name" value="Nucleic acid-binding proteins"/>
    <property type="match status" value="1"/>
</dbReference>
<dbReference type="Gene3D" id="1.20.1440.120">
    <property type="entry name" value="Recombination protein O, C-terminal domain"/>
    <property type="match status" value="1"/>
</dbReference>
<dbReference type="HAMAP" id="MF_00201">
    <property type="entry name" value="RecO"/>
    <property type="match status" value="1"/>
</dbReference>
<dbReference type="InterPro" id="IPR037278">
    <property type="entry name" value="ARFGAP/RecO"/>
</dbReference>
<dbReference type="InterPro" id="IPR022572">
    <property type="entry name" value="DNA_rep/recomb_RecO_N"/>
</dbReference>
<dbReference type="InterPro" id="IPR012340">
    <property type="entry name" value="NA-bd_OB-fold"/>
</dbReference>
<dbReference type="InterPro" id="IPR003717">
    <property type="entry name" value="RecO"/>
</dbReference>
<dbReference type="InterPro" id="IPR042242">
    <property type="entry name" value="RecO_C"/>
</dbReference>
<dbReference type="NCBIfam" id="TIGR00613">
    <property type="entry name" value="reco"/>
    <property type="match status" value="1"/>
</dbReference>
<dbReference type="PANTHER" id="PTHR33991">
    <property type="entry name" value="DNA REPAIR PROTEIN RECO"/>
    <property type="match status" value="1"/>
</dbReference>
<dbReference type="PANTHER" id="PTHR33991:SF1">
    <property type="entry name" value="DNA REPAIR PROTEIN RECO"/>
    <property type="match status" value="1"/>
</dbReference>
<dbReference type="Pfam" id="PF02565">
    <property type="entry name" value="RecO_C"/>
    <property type="match status" value="1"/>
</dbReference>
<dbReference type="Pfam" id="PF11967">
    <property type="entry name" value="RecO_N"/>
    <property type="match status" value="1"/>
</dbReference>
<dbReference type="SUPFAM" id="SSF57863">
    <property type="entry name" value="ArfGap/RecO-like zinc finger"/>
    <property type="match status" value="1"/>
</dbReference>
<dbReference type="SUPFAM" id="SSF50249">
    <property type="entry name" value="Nucleic acid-binding proteins"/>
    <property type="match status" value="1"/>
</dbReference>
<keyword id="KW-0227">DNA damage</keyword>
<keyword id="KW-0233">DNA recombination</keyword>
<keyword id="KW-0234">DNA repair</keyword>
<comment type="function">
    <text evidence="1">Involved in DNA repair and RecF pathway recombination.</text>
</comment>
<comment type="similarity">
    <text evidence="1">Belongs to the RecO family.</text>
</comment>